<keyword id="KW-0238">DNA-binding</keyword>
<keyword id="KW-1017">Isopeptide bond</keyword>
<keyword id="KW-0479">Metal-binding</keyword>
<keyword id="KW-0539">Nucleus</keyword>
<keyword id="KW-1185">Reference proteome</keyword>
<keyword id="KW-0677">Repeat</keyword>
<keyword id="KW-0678">Repressor</keyword>
<keyword id="KW-0804">Transcription</keyword>
<keyword id="KW-0805">Transcription regulation</keyword>
<keyword id="KW-0832">Ubl conjugation</keyword>
<keyword id="KW-0862">Zinc</keyword>
<keyword id="KW-0863">Zinc-finger</keyword>
<gene>
    <name type="primary">ZNF540</name>
</gene>
<proteinExistence type="evidence at transcript level"/>
<feature type="chain" id="PRO_0000047642" description="Zinc finger protein 540">
    <location>
        <begin position="1"/>
        <end position="660"/>
    </location>
</feature>
<feature type="domain" description="KRAB" evidence="4">
    <location>
        <begin position="6"/>
        <end position="77"/>
    </location>
</feature>
<feature type="zinc finger region" description="C2H2-type 1" evidence="3">
    <location>
        <begin position="187"/>
        <end position="209"/>
    </location>
</feature>
<feature type="zinc finger region" description="C2H2-type 2" evidence="3">
    <location>
        <begin position="215"/>
        <end position="237"/>
    </location>
</feature>
<feature type="zinc finger region" description="C2H2-type 3" evidence="3">
    <location>
        <begin position="243"/>
        <end position="265"/>
    </location>
</feature>
<feature type="zinc finger region" description="C2H2-type 4" evidence="3">
    <location>
        <begin position="271"/>
        <end position="293"/>
    </location>
</feature>
<feature type="zinc finger region" description="C2H2-type 5" evidence="3">
    <location>
        <begin position="299"/>
        <end position="321"/>
    </location>
</feature>
<feature type="zinc finger region" description="C2H2-type 6" evidence="3">
    <location>
        <begin position="327"/>
        <end position="349"/>
    </location>
</feature>
<feature type="zinc finger region" description="C2H2-type 7" evidence="3">
    <location>
        <begin position="355"/>
        <end position="377"/>
    </location>
</feature>
<feature type="zinc finger region" description="C2H2-type 8" evidence="3">
    <location>
        <begin position="383"/>
        <end position="405"/>
    </location>
</feature>
<feature type="zinc finger region" description="C2H2-type 9" evidence="3">
    <location>
        <begin position="411"/>
        <end position="433"/>
    </location>
</feature>
<feature type="zinc finger region" description="C2H2-type 10" evidence="3">
    <location>
        <begin position="439"/>
        <end position="461"/>
    </location>
</feature>
<feature type="zinc finger region" description="C2H2-type 11" evidence="3">
    <location>
        <begin position="467"/>
        <end position="489"/>
    </location>
</feature>
<feature type="zinc finger region" description="C2H2-type 12" evidence="3">
    <location>
        <begin position="495"/>
        <end position="517"/>
    </location>
</feature>
<feature type="zinc finger region" description="C2H2-type 13" evidence="3">
    <location>
        <begin position="523"/>
        <end position="545"/>
    </location>
</feature>
<feature type="zinc finger region" description="C2H2-type 14" evidence="3">
    <location>
        <begin position="551"/>
        <end position="573"/>
    </location>
</feature>
<feature type="zinc finger region" description="C2H2-type 15" evidence="3">
    <location>
        <begin position="579"/>
        <end position="601"/>
    </location>
</feature>
<feature type="zinc finger region" description="C2H2-type 16" evidence="3">
    <location>
        <begin position="607"/>
        <end position="629"/>
    </location>
</feature>
<feature type="zinc finger region" description="C2H2-type 17" evidence="3">
    <location>
        <begin position="635"/>
        <end position="657"/>
    </location>
</feature>
<feature type="cross-link" description="Glycyl lysine isopeptide (Lys-Gly) (interchain with G-Cter in SUMO2)" evidence="2">
    <location>
        <position position="109"/>
    </location>
</feature>
<feature type="sequence conflict" description="In Ref. 1; CAH89886." evidence="5" ref="1">
    <original>T</original>
    <variation>S</variation>
    <location>
        <position position="7"/>
    </location>
</feature>
<sequence>MAHALVTFRDVTIDFSQKEWECLDTTQRKLYRDVMLENYNNLVSLGYSGSKPDVITLLEQGKEPCVAARDVTGRQYPGLLSRHKTKKLSSEKDIHDISLSKGSKIEKSKTLHLKGSIFRNEWQSKSEFEGQQGLKERSISQKKIIFKKMSTDRKHPSFTLNQRIHNSEKSCDSNLVQHGKIDSDVKHDCKECGSTFNNVYQLTLHQKIHTGEKSCKCEKCGKVFSHSYQLTLHQRFHTGEKPYECQECGKTFILYPQLNRHQKIHTGKKPYMCKKCDKSFFSRLELTQHKRIHTGKKSYECKECGKVFQLVFYFKEHERIHTGKKPYECKECGKAFSVCGQLTRHQKIHTGVKPYECKECGKTFRLSFYLTEHRRTHAGKKPYECKECGKSFNVRGQLNRHKAIHTGIKPFACKVCEKAFSYSGDLRVHSRIHTGEKPYECKECGKAFMLRSVLTEHQRLHTGVKPYECKECGKTFRVRSQISLHKKIHTDVKPYKCVRCGKTFRFGFYLTEHQRIHTGEKPYKCKECGKAFIRRGNLKEHLKIHSGLKPYDCKECGKSFSRRGQFTEHQKIHTGVKPYKCKECGKAFSRSVDLRIHQRIHTGEKPYECKQCGKAFRLNSHLTEHQRIHTGEKPYECKVCRKAFRQYSHLYQHQKTHNVI</sequence>
<comment type="function">
    <text evidence="1">May act as a transcriptional repressor.</text>
</comment>
<comment type="subunit">
    <text evidence="1">May interact with MVP.</text>
</comment>
<comment type="subcellular location">
    <subcellularLocation>
        <location evidence="1">Nucleus</location>
    </subcellularLocation>
</comment>
<comment type="similarity">
    <text evidence="5">Belongs to the krueppel C2H2-type zinc-finger protein family.</text>
</comment>
<name>ZN540_PONAB</name>
<dbReference type="EMBL" id="CR857611">
    <property type="protein sequence ID" value="CAH89886.1"/>
    <property type="molecule type" value="mRNA"/>
</dbReference>
<dbReference type="EMBL" id="CR860780">
    <property type="protein sequence ID" value="CAH92890.1"/>
    <property type="molecule type" value="mRNA"/>
</dbReference>
<dbReference type="RefSeq" id="NP_001127601.1">
    <property type="nucleotide sequence ID" value="NM_001134129.1"/>
</dbReference>
<dbReference type="SMR" id="Q5R5S6"/>
<dbReference type="Ensembl" id="ENSPPYT00000047615.1">
    <property type="protein sequence ID" value="ENSPPYP00000041824.1"/>
    <property type="gene ID" value="ENSPPYG00000038995.1"/>
</dbReference>
<dbReference type="GeneID" id="100174680"/>
<dbReference type="KEGG" id="pon:100174680"/>
<dbReference type="CTD" id="163255"/>
<dbReference type="eggNOG" id="KOG1721">
    <property type="taxonomic scope" value="Eukaryota"/>
</dbReference>
<dbReference type="GeneTree" id="ENSGT00940000164340"/>
<dbReference type="InParanoid" id="Q5R5S6"/>
<dbReference type="OMA" id="SWRGQFT"/>
<dbReference type="OrthoDB" id="9411774at2759"/>
<dbReference type="Proteomes" id="UP000001595">
    <property type="component" value="Chromosome 19"/>
</dbReference>
<dbReference type="GO" id="GO:0005829">
    <property type="term" value="C:cytosol"/>
    <property type="evidence" value="ECO:0007669"/>
    <property type="project" value="Ensembl"/>
</dbReference>
<dbReference type="GO" id="GO:0005654">
    <property type="term" value="C:nucleoplasm"/>
    <property type="evidence" value="ECO:0007669"/>
    <property type="project" value="Ensembl"/>
</dbReference>
<dbReference type="GO" id="GO:0000981">
    <property type="term" value="F:DNA-binding transcription factor activity, RNA polymerase II-specific"/>
    <property type="evidence" value="ECO:0007669"/>
    <property type="project" value="TreeGrafter"/>
</dbReference>
<dbReference type="GO" id="GO:0000900">
    <property type="term" value="F:mRNA regulatory element binding translation repressor activity"/>
    <property type="evidence" value="ECO:0007669"/>
    <property type="project" value="Ensembl"/>
</dbReference>
<dbReference type="GO" id="GO:0000978">
    <property type="term" value="F:RNA polymerase II cis-regulatory region sequence-specific DNA binding"/>
    <property type="evidence" value="ECO:0007669"/>
    <property type="project" value="TreeGrafter"/>
</dbReference>
<dbReference type="GO" id="GO:0008270">
    <property type="term" value="F:zinc ion binding"/>
    <property type="evidence" value="ECO:0007669"/>
    <property type="project" value="UniProtKB-KW"/>
</dbReference>
<dbReference type="GO" id="GO:0045892">
    <property type="term" value="P:negative regulation of DNA-templated transcription"/>
    <property type="evidence" value="ECO:0007669"/>
    <property type="project" value="Ensembl"/>
</dbReference>
<dbReference type="CDD" id="cd07765">
    <property type="entry name" value="KRAB_A-box"/>
    <property type="match status" value="1"/>
</dbReference>
<dbReference type="FunFam" id="3.30.160.60:FF:003795">
    <property type="match status" value="1"/>
</dbReference>
<dbReference type="FunFam" id="3.30.160.60:FF:002737">
    <property type="entry name" value="AGAP008430-PA"/>
    <property type="match status" value="1"/>
</dbReference>
<dbReference type="FunFam" id="3.30.160.60:FF:000020">
    <property type="entry name" value="Zinc finger protein 14 homolog"/>
    <property type="match status" value="3"/>
</dbReference>
<dbReference type="FunFam" id="3.30.160.60:FF:000178">
    <property type="entry name" value="Zinc finger protein 14 homolog"/>
    <property type="match status" value="1"/>
</dbReference>
<dbReference type="FunFam" id="3.30.160.60:FF:000551">
    <property type="entry name" value="zinc finger protein 197 isoform X1"/>
    <property type="match status" value="1"/>
</dbReference>
<dbReference type="FunFam" id="3.30.160.60:FF:000204">
    <property type="entry name" value="Zinc finger protein 331"/>
    <property type="match status" value="1"/>
</dbReference>
<dbReference type="FunFam" id="3.30.160.60:FF:000690">
    <property type="entry name" value="Zinc finger protein 354C"/>
    <property type="match status" value="1"/>
</dbReference>
<dbReference type="FunFam" id="3.30.160.60:FF:001498">
    <property type="entry name" value="Zinc finger protein 404"/>
    <property type="match status" value="1"/>
</dbReference>
<dbReference type="FunFam" id="3.30.160.60:FF:002090">
    <property type="entry name" value="Zinc finger protein 473"/>
    <property type="match status" value="1"/>
</dbReference>
<dbReference type="FunFam" id="3.30.160.60:FF:001174">
    <property type="entry name" value="zinc finger protein 527 isoform X1"/>
    <property type="match status" value="1"/>
</dbReference>
<dbReference type="FunFam" id="3.30.160.60:FF:001505">
    <property type="entry name" value="Zinc finger protein 540"/>
    <property type="match status" value="1"/>
</dbReference>
<dbReference type="FunFam" id="3.30.160.60:FF:002254">
    <property type="entry name" value="Zinc finger protein 540"/>
    <property type="match status" value="2"/>
</dbReference>
<dbReference type="FunFam" id="3.30.160.60:FF:002257">
    <property type="entry name" value="Zinc finger protein 540"/>
    <property type="match status" value="1"/>
</dbReference>
<dbReference type="FunFam" id="3.30.160.60:FF:000094">
    <property type="entry name" value="Zinc finger protein 605"/>
    <property type="match status" value="1"/>
</dbReference>
<dbReference type="Gene3D" id="6.10.140.140">
    <property type="match status" value="1"/>
</dbReference>
<dbReference type="Gene3D" id="3.30.160.60">
    <property type="entry name" value="Classic Zinc Finger"/>
    <property type="match status" value="17"/>
</dbReference>
<dbReference type="InterPro" id="IPR050752">
    <property type="entry name" value="C2H2-ZF_domain"/>
</dbReference>
<dbReference type="InterPro" id="IPR001909">
    <property type="entry name" value="KRAB"/>
</dbReference>
<dbReference type="InterPro" id="IPR036051">
    <property type="entry name" value="KRAB_dom_sf"/>
</dbReference>
<dbReference type="InterPro" id="IPR036236">
    <property type="entry name" value="Znf_C2H2_sf"/>
</dbReference>
<dbReference type="InterPro" id="IPR013087">
    <property type="entry name" value="Znf_C2H2_type"/>
</dbReference>
<dbReference type="PANTHER" id="PTHR24384">
    <property type="entry name" value="FINGER PUTATIVE TRANSCRIPTION FACTOR FAMILY-RELATED"/>
    <property type="match status" value="1"/>
</dbReference>
<dbReference type="PANTHER" id="PTHR24384:SF235">
    <property type="entry name" value="ZINC FINGER PROTEIN 519"/>
    <property type="match status" value="1"/>
</dbReference>
<dbReference type="Pfam" id="PF01352">
    <property type="entry name" value="KRAB"/>
    <property type="match status" value="1"/>
</dbReference>
<dbReference type="Pfam" id="PF00096">
    <property type="entry name" value="zf-C2H2"/>
    <property type="match status" value="16"/>
</dbReference>
<dbReference type="Pfam" id="PF13912">
    <property type="entry name" value="zf-C2H2_6"/>
    <property type="match status" value="1"/>
</dbReference>
<dbReference type="SMART" id="SM00349">
    <property type="entry name" value="KRAB"/>
    <property type="match status" value="1"/>
</dbReference>
<dbReference type="SMART" id="SM00355">
    <property type="entry name" value="ZnF_C2H2"/>
    <property type="match status" value="17"/>
</dbReference>
<dbReference type="SUPFAM" id="SSF57667">
    <property type="entry name" value="beta-beta-alpha zinc fingers"/>
    <property type="match status" value="9"/>
</dbReference>
<dbReference type="SUPFAM" id="SSF109640">
    <property type="entry name" value="KRAB domain (Kruppel-associated box)"/>
    <property type="match status" value="1"/>
</dbReference>
<dbReference type="PROSITE" id="PS50805">
    <property type="entry name" value="KRAB"/>
    <property type="match status" value="1"/>
</dbReference>
<dbReference type="PROSITE" id="PS00028">
    <property type="entry name" value="ZINC_FINGER_C2H2_1"/>
    <property type="match status" value="17"/>
</dbReference>
<dbReference type="PROSITE" id="PS50157">
    <property type="entry name" value="ZINC_FINGER_C2H2_2"/>
    <property type="match status" value="17"/>
</dbReference>
<protein>
    <recommendedName>
        <fullName>Zinc finger protein 540</fullName>
    </recommendedName>
</protein>
<evidence type="ECO:0000250" key="1"/>
<evidence type="ECO:0000250" key="2">
    <source>
        <dbReference type="UniProtKB" id="Q9Y2G7"/>
    </source>
</evidence>
<evidence type="ECO:0000255" key="3">
    <source>
        <dbReference type="PROSITE-ProRule" id="PRU00042"/>
    </source>
</evidence>
<evidence type="ECO:0000255" key="4">
    <source>
        <dbReference type="PROSITE-ProRule" id="PRU00119"/>
    </source>
</evidence>
<evidence type="ECO:0000305" key="5"/>
<reference key="1">
    <citation type="submission" date="2004-11" db="EMBL/GenBank/DDBJ databases">
        <authorList>
            <consortium name="The German cDNA consortium"/>
        </authorList>
    </citation>
    <scope>NUCLEOTIDE SEQUENCE [LARGE SCALE MRNA]</scope>
    <source>
        <tissue>Brain cortex</tissue>
    </source>
</reference>
<accession>Q5R5S6</accession>
<accession>Q5REC1</accession>
<organism>
    <name type="scientific">Pongo abelii</name>
    <name type="common">Sumatran orangutan</name>
    <name type="synonym">Pongo pygmaeus abelii</name>
    <dbReference type="NCBI Taxonomy" id="9601"/>
    <lineage>
        <taxon>Eukaryota</taxon>
        <taxon>Metazoa</taxon>
        <taxon>Chordata</taxon>
        <taxon>Craniata</taxon>
        <taxon>Vertebrata</taxon>
        <taxon>Euteleostomi</taxon>
        <taxon>Mammalia</taxon>
        <taxon>Eutheria</taxon>
        <taxon>Euarchontoglires</taxon>
        <taxon>Primates</taxon>
        <taxon>Haplorrhini</taxon>
        <taxon>Catarrhini</taxon>
        <taxon>Hominidae</taxon>
        <taxon>Pongo</taxon>
    </lineage>
</organism>